<gene>
    <name evidence="1" type="primary">glyA</name>
    <name type="ordered locus">HPSH_00930</name>
</gene>
<organism>
    <name type="scientific">Helicobacter pylori (strain Shi470)</name>
    <dbReference type="NCBI Taxonomy" id="512562"/>
    <lineage>
        <taxon>Bacteria</taxon>
        <taxon>Pseudomonadati</taxon>
        <taxon>Campylobacterota</taxon>
        <taxon>Epsilonproteobacteria</taxon>
        <taxon>Campylobacterales</taxon>
        <taxon>Helicobacteraceae</taxon>
        <taxon>Helicobacter</taxon>
    </lineage>
</organism>
<comment type="function">
    <text evidence="1">Catalyzes the reversible interconversion of serine and glycine with tetrahydrofolate (THF) serving as the one-carbon carrier. This reaction serves as the major source of one-carbon groups required for the biosynthesis of purines, thymidylate, methionine, and other important biomolecules. Also exhibits THF-independent aldolase activity toward beta-hydroxyamino acids, producing glycine and aldehydes, via a retro-aldol mechanism.</text>
</comment>
<comment type="catalytic activity">
    <reaction evidence="1">
        <text>(6R)-5,10-methylene-5,6,7,8-tetrahydrofolate + glycine + H2O = (6S)-5,6,7,8-tetrahydrofolate + L-serine</text>
        <dbReference type="Rhea" id="RHEA:15481"/>
        <dbReference type="ChEBI" id="CHEBI:15377"/>
        <dbReference type="ChEBI" id="CHEBI:15636"/>
        <dbReference type="ChEBI" id="CHEBI:33384"/>
        <dbReference type="ChEBI" id="CHEBI:57305"/>
        <dbReference type="ChEBI" id="CHEBI:57453"/>
        <dbReference type="EC" id="2.1.2.1"/>
    </reaction>
</comment>
<comment type="cofactor">
    <cofactor evidence="1">
        <name>pyridoxal 5'-phosphate</name>
        <dbReference type="ChEBI" id="CHEBI:597326"/>
    </cofactor>
</comment>
<comment type="pathway">
    <text evidence="1">One-carbon metabolism; tetrahydrofolate interconversion.</text>
</comment>
<comment type="pathway">
    <text evidence="1">Amino-acid biosynthesis; glycine biosynthesis; glycine from L-serine: step 1/1.</text>
</comment>
<comment type="subunit">
    <text evidence="1">Homodimer.</text>
</comment>
<comment type="subcellular location">
    <subcellularLocation>
        <location evidence="1">Cytoplasm</location>
    </subcellularLocation>
</comment>
<comment type="similarity">
    <text evidence="1">Belongs to the SHMT family.</text>
</comment>
<accession>B2US14</accession>
<dbReference type="EC" id="2.1.2.1" evidence="1"/>
<dbReference type="EMBL" id="CP001072">
    <property type="protein sequence ID" value="ACD47646.1"/>
    <property type="molecule type" value="Genomic_DNA"/>
</dbReference>
<dbReference type="RefSeq" id="WP_000323091.1">
    <property type="nucleotide sequence ID" value="NC_010698.2"/>
</dbReference>
<dbReference type="SMR" id="B2US14"/>
<dbReference type="KEGG" id="hps:HPSH_00930"/>
<dbReference type="HOGENOM" id="CLU_022477_2_1_7"/>
<dbReference type="UniPathway" id="UPA00193"/>
<dbReference type="UniPathway" id="UPA00288">
    <property type="reaction ID" value="UER01023"/>
</dbReference>
<dbReference type="GO" id="GO:0005829">
    <property type="term" value="C:cytosol"/>
    <property type="evidence" value="ECO:0007669"/>
    <property type="project" value="TreeGrafter"/>
</dbReference>
<dbReference type="GO" id="GO:0004372">
    <property type="term" value="F:glycine hydroxymethyltransferase activity"/>
    <property type="evidence" value="ECO:0007669"/>
    <property type="project" value="UniProtKB-UniRule"/>
</dbReference>
<dbReference type="GO" id="GO:0030170">
    <property type="term" value="F:pyridoxal phosphate binding"/>
    <property type="evidence" value="ECO:0007669"/>
    <property type="project" value="UniProtKB-UniRule"/>
</dbReference>
<dbReference type="GO" id="GO:0019264">
    <property type="term" value="P:glycine biosynthetic process from serine"/>
    <property type="evidence" value="ECO:0007669"/>
    <property type="project" value="UniProtKB-UniRule"/>
</dbReference>
<dbReference type="GO" id="GO:0035999">
    <property type="term" value="P:tetrahydrofolate interconversion"/>
    <property type="evidence" value="ECO:0007669"/>
    <property type="project" value="UniProtKB-UniRule"/>
</dbReference>
<dbReference type="CDD" id="cd00378">
    <property type="entry name" value="SHMT"/>
    <property type="match status" value="1"/>
</dbReference>
<dbReference type="FunFam" id="3.40.640.10:FF:000001">
    <property type="entry name" value="Serine hydroxymethyltransferase"/>
    <property type="match status" value="1"/>
</dbReference>
<dbReference type="Gene3D" id="3.90.1150.10">
    <property type="entry name" value="Aspartate Aminotransferase, domain 1"/>
    <property type="match status" value="1"/>
</dbReference>
<dbReference type="Gene3D" id="3.40.640.10">
    <property type="entry name" value="Type I PLP-dependent aspartate aminotransferase-like (Major domain)"/>
    <property type="match status" value="1"/>
</dbReference>
<dbReference type="HAMAP" id="MF_00051">
    <property type="entry name" value="SHMT"/>
    <property type="match status" value="1"/>
</dbReference>
<dbReference type="InterPro" id="IPR015424">
    <property type="entry name" value="PyrdxlP-dep_Trfase"/>
</dbReference>
<dbReference type="InterPro" id="IPR015421">
    <property type="entry name" value="PyrdxlP-dep_Trfase_major"/>
</dbReference>
<dbReference type="InterPro" id="IPR015422">
    <property type="entry name" value="PyrdxlP-dep_Trfase_small"/>
</dbReference>
<dbReference type="InterPro" id="IPR001085">
    <property type="entry name" value="Ser_HO-MeTrfase"/>
</dbReference>
<dbReference type="InterPro" id="IPR049943">
    <property type="entry name" value="Ser_HO-MeTrfase-like"/>
</dbReference>
<dbReference type="InterPro" id="IPR019798">
    <property type="entry name" value="Ser_HO-MeTrfase_PLP_BS"/>
</dbReference>
<dbReference type="InterPro" id="IPR039429">
    <property type="entry name" value="SHMT-like_dom"/>
</dbReference>
<dbReference type="NCBIfam" id="NF000586">
    <property type="entry name" value="PRK00011.1"/>
    <property type="match status" value="1"/>
</dbReference>
<dbReference type="PANTHER" id="PTHR11680">
    <property type="entry name" value="SERINE HYDROXYMETHYLTRANSFERASE"/>
    <property type="match status" value="1"/>
</dbReference>
<dbReference type="PANTHER" id="PTHR11680:SF50">
    <property type="entry name" value="SERINE HYDROXYMETHYLTRANSFERASE"/>
    <property type="match status" value="1"/>
</dbReference>
<dbReference type="Pfam" id="PF00464">
    <property type="entry name" value="SHMT"/>
    <property type="match status" value="1"/>
</dbReference>
<dbReference type="PIRSF" id="PIRSF000412">
    <property type="entry name" value="SHMT"/>
    <property type="match status" value="1"/>
</dbReference>
<dbReference type="SUPFAM" id="SSF53383">
    <property type="entry name" value="PLP-dependent transferases"/>
    <property type="match status" value="1"/>
</dbReference>
<dbReference type="PROSITE" id="PS00096">
    <property type="entry name" value="SHMT"/>
    <property type="match status" value="1"/>
</dbReference>
<feature type="chain" id="PRO_1000091547" description="Serine hydroxymethyltransferase">
    <location>
        <begin position="1"/>
        <end position="416"/>
    </location>
</feature>
<feature type="binding site" evidence="1">
    <location>
        <position position="118"/>
    </location>
    <ligand>
        <name>(6S)-5,6,7,8-tetrahydrofolate</name>
        <dbReference type="ChEBI" id="CHEBI:57453"/>
    </ligand>
</feature>
<feature type="binding site" evidence="1">
    <location>
        <begin position="122"/>
        <end position="124"/>
    </location>
    <ligand>
        <name>(6S)-5,6,7,8-tetrahydrofolate</name>
        <dbReference type="ChEBI" id="CHEBI:57453"/>
    </ligand>
</feature>
<feature type="binding site" evidence="1">
    <location>
        <position position="242"/>
    </location>
    <ligand>
        <name>(6S)-5,6,7,8-tetrahydrofolate</name>
        <dbReference type="ChEBI" id="CHEBI:57453"/>
    </ligand>
</feature>
<feature type="binding site" evidence="1">
    <location>
        <begin position="350"/>
        <end position="352"/>
    </location>
    <ligand>
        <name>(6S)-5,6,7,8-tetrahydrofolate</name>
        <dbReference type="ChEBI" id="CHEBI:57453"/>
    </ligand>
</feature>
<feature type="site" description="Plays an important role in substrate specificity" evidence="1">
    <location>
        <position position="225"/>
    </location>
</feature>
<feature type="modified residue" description="N6-(pyridoxal phosphate)lysine" evidence="1">
    <location>
        <position position="226"/>
    </location>
</feature>
<keyword id="KW-0028">Amino-acid biosynthesis</keyword>
<keyword id="KW-0963">Cytoplasm</keyword>
<keyword id="KW-0554">One-carbon metabolism</keyword>
<keyword id="KW-0663">Pyridoxal phosphate</keyword>
<keyword id="KW-0808">Transferase</keyword>
<sequence length="416" mass="45588">MAYFLEQTDSEIFELIFEEYKRQNEHLEMIASENYTFASVMEAMGSVLTNKYAEGYPNKRYYGGCEVVDKIESLAIERAKKLFNCQFANVQAHSGSQANNAVYHALLKPYDKILGMDLSCGGHLTHGAKVSLTGKHYQSFSYGVNLDGYIDYEEALKIAQSVKPEIIVCGFSAYPREIDFKKFREIADEVGALLLGDIAHVAGLVVAGEHAHPFPHCHVVSSTTHKTLRGPRGGLILTNDEEIAAKIDKAIFPGTQGGPLMHAIAAKAVGFKENLKPEFKAYAQLVKSNMQVLAKALQEKNHKLVSGGTSNHLLLMDFLDKPYSGKDADIALGNAGITVNKNTIPGETRSPFVTSGIRIGSAALSARGMGAKEFEIIGNKISDILNDINNVSLQLHVKEELKAMASQFPVYQQPIF</sequence>
<reference key="1">
    <citation type="submission" date="2008-05" db="EMBL/GenBank/DDBJ databases">
        <title>Genome sequence of Helicobacter pylori from the remote Amazon: traces of Asian ancestry of the first Americans.</title>
        <authorList>
            <person name="Kersulyte D."/>
            <person name="Kalia A."/>
            <person name="Gilman R.H."/>
            <person name="Berg D.E."/>
        </authorList>
    </citation>
    <scope>NUCLEOTIDE SEQUENCE [LARGE SCALE GENOMIC DNA]</scope>
    <source>
        <strain>Shi470</strain>
    </source>
</reference>
<name>GLYA_HELPS</name>
<evidence type="ECO:0000255" key="1">
    <source>
        <dbReference type="HAMAP-Rule" id="MF_00051"/>
    </source>
</evidence>
<proteinExistence type="inferred from homology"/>
<protein>
    <recommendedName>
        <fullName evidence="1">Serine hydroxymethyltransferase</fullName>
        <shortName evidence="1">SHMT</shortName>
        <shortName evidence="1">Serine methylase</shortName>
        <ecNumber evidence="1">2.1.2.1</ecNumber>
    </recommendedName>
</protein>